<keyword id="KW-0216">Detoxification</keyword>
<keyword id="KW-0285">Flavoprotein</keyword>
<keyword id="KW-0288">FMN</keyword>
<keyword id="KW-0521">NADP</keyword>
<keyword id="KW-0560">Oxidoreductase</keyword>
<comment type="function">
    <text evidence="1">Catalyzes the reduction of the double bond of an array of alpha,beta-unsaturated aldehydes and ketones. It also reduces the nitro group of nitroester and nitroaromatic compounds. It could have a role in detoxification processes.</text>
</comment>
<comment type="catalytic activity">
    <reaction evidence="1">
        <text>A + NADPH + H(+) = AH2 + NADP(+)</text>
        <dbReference type="Rhea" id="RHEA:13149"/>
        <dbReference type="ChEBI" id="CHEBI:13193"/>
        <dbReference type="ChEBI" id="CHEBI:15378"/>
        <dbReference type="ChEBI" id="CHEBI:17499"/>
        <dbReference type="ChEBI" id="CHEBI:57783"/>
        <dbReference type="ChEBI" id="CHEBI:58349"/>
        <dbReference type="EC" id="1.6.99.1"/>
    </reaction>
</comment>
<comment type="cofactor">
    <cofactor evidence="1">
        <name>FMN</name>
        <dbReference type="ChEBI" id="CHEBI:58210"/>
    </cofactor>
</comment>
<comment type="subunit">
    <text evidence="1">Homotetramer.</text>
</comment>
<comment type="similarity">
    <text evidence="1">Belongs to the NADH:flavin oxidoreductase/NADH oxidase family. NamA subfamily.</text>
</comment>
<dbReference type="EC" id="1.6.99.1" evidence="1"/>
<dbReference type="EMBL" id="CP000560">
    <property type="protein sequence ID" value="ABS74573.1"/>
    <property type="molecule type" value="Genomic_DNA"/>
</dbReference>
<dbReference type="RefSeq" id="WP_003153250.1">
    <property type="nucleotide sequence ID" value="NC_009725.2"/>
</dbReference>
<dbReference type="SMR" id="A7Z6E7"/>
<dbReference type="GeneID" id="93081349"/>
<dbReference type="KEGG" id="bay:RBAM_022120"/>
<dbReference type="HOGENOM" id="CLU_012153_2_1_9"/>
<dbReference type="Proteomes" id="UP000001120">
    <property type="component" value="Chromosome"/>
</dbReference>
<dbReference type="GO" id="GO:0010181">
    <property type="term" value="F:FMN binding"/>
    <property type="evidence" value="ECO:0007669"/>
    <property type="project" value="UniProtKB-UniRule"/>
</dbReference>
<dbReference type="GO" id="GO:0050661">
    <property type="term" value="F:NADP binding"/>
    <property type="evidence" value="ECO:0007669"/>
    <property type="project" value="UniProtKB-UniRule"/>
</dbReference>
<dbReference type="GO" id="GO:0003959">
    <property type="term" value="F:NADPH dehydrogenase activity"/>
    <property type="evidence" value="ECO:0007669"/>
    <property type="project" value="UniProtKB-UniRule"/>
</dbReference>
<dbReference type="GO" id="GO:0009636">
    <property type="term" value="P:response to toxic substance"/>
    <property type="evidence" value="ECO:0007669"/>
    <property type="project" value="UniProtKB-KW"/>
</dbReference>
<dbReference type="CDD" id="cd02932">
    <property type="entry name" value="OYE_YqiM_FMN"/>
    <property type="match status" value="1"/>
</dbReference>
<dbReference type="Gene3D" id="3.20.20.70">
    <property type="entry name" value="Aldolase class I"/>
    <property type="match status" value="1"/>
</dbReference>
<dbReference type="HAMAP" id="MF_01614">
    <property type="entry name" value="NamA"/>
    <property type="match status" value="1"/>
</dbReference>
<dbReference type="InterPro" id="IPR013785">
    <property type="entry name" value="Aldolase_TIM"/>
</dbReference>
<dbReference type="InterPro" id="IPR023663">
    <property type="entry name" value="NADPH_DH_bac"/>
</dbReference>
<dbReference type="InterPro" id="IPR001155">
    <property type="entry name" value="OxRdtase_FMN_N"/>
</dbReference>
<dbReference type="InterPro" id="IPR044152">
    <property type="entry name" value="YqjM-like"/>
</dbReference>
<dbReference type="NCBIfam" id="NF010047">
    <property type="entry name" value="PRK13523.1"/>
    <property type="match status" value="1"/>
</dbReference>
<dbReference type="PANTHER" id="PTHR43303">
    <property type="entry name" value="NADPH DEHYDROGENASE C23G7.10C-RELATED"/>
    <property type="match status" value="1"/>
</dbReference>
<dbReference type="PANTHER" id="PTHR43303:SF4">
    <property type="entry name" value="NADPH DEHYDROGENASE C23G7.10C-RELATED"/>
    <property type="match status" value="1"/>
</dbReference>
<dbReference type="Pfam" id="PF00724">
    <property type="entry name" value="Oxidored_FMN"/>
    <property type="match status" value="1"/>
</dbReference>
<dbReference type="SUPFAM" id="SSF51395">
    <property type="entry name" value="FMN-linked oxidoreductases"/>
    <property type="match status" value="1"/>
</dbReference>
<gene>
    <name evidence="1" type="primary">namA</name>
    <name type="synonym">yqjM</name>
    <name type="ordered locus">RBAM_022120</name>
</gene>
<sequence length="338" mass="37643">MARKLFTPWTVKDVTIKNRIVMAPMCMYSSHEKDGKLQPFHMAHYISRAIGQVGLIIVEATAVNPQGRISDQDLGIWSDDHIEGFAKLTEQVKAQGSKIGIQLAHAGRKAELEGDIYAPSAIPFDEQSKTPAEMTTEQIKETIQEFKQAAARAKEAGFDIIELHAAHGYLMHEFLSPLSNHRTDEYGGSHENRYRFLGETIEAVKEVWDGPLFVRISASDYTDKGLDIADHIGFAKWMKEQGVDLIDCSSGALVQADINVFPGYQVSFAEKIREQAEIATGAVGLITTGTMAEEILQNNRADLIFVARELLRDPHFARSAAKQLNTEIPSPVQYDRAW</sequence>
<evidence type="ECO:0000255" key="1">
    <source>
        <dbReference type="HAMAP-Rule" id="MF_01614"/>
    </source>
</evidence>
<name>NAMA_BACVZ</name>
<accession>A7Z6E7</accession>
<feature type="chain" id="PRO_0000323519" description="NADPH dehydrogenase">
    <location>
        <begin position="1"/>
        <end position="338"/>
    </location>
</feature>
<feature type="binding site" evidence="1">
    <location>
        <position position="28"/>
    </location>
    <ligand>
        <name>substrate</name>
    </ligand>
</feature>
<feature type="binding site" evidence="1">
    <location>
        <position position="60"/>
    </location>
    <ligand>
        <name>FMN</name>
        <dbReference type="ChEBI" id="CHEBI:58210"/>
    </ligand>
</feature>
<feature type="binding site" evidence="1">
    <location>
        <position position="102"/>
    </location>
    <ligand>
        <name>FMN</name>
        <dbReference type="ChEBI" id="CHEBI:58210"/>
    </ligand>
</feature>
<feature type="binding site" evidence="1">
    <location>
        <begin position="164"/>
        <end position="167"/>
    </location>
    <ligand>
        <name>substrate</name>
    </ligand>
</feature>
<feature type="binding site" evidence="1">
    <location>
        <position position="215"/>
    </location>
    <ligand>
        <name>FMN</name>
        <dbReference type="ChEBI" id="CHEBI:58210"/>
    </ligand>
</feature>
<feature type="binding site" evidence="1">
    <location>
        <begin position="307"/>
        <end position="308"/>
    </location>
    <ligand>
        <name>FMN</name>
        <dbReference type="ChEBI" id="CHEBI:58210"/>
    </ligand>
</feature>
<proteinExistence type="inferred from homology"/>
<protein>
    <recommendedName>
        <fullName evidence="1">NADPH dehydrogenase</fullName>
        <ecNumber evidence="1">1.6.99.1</ecNumber>
    </recommendedName>
</protein>
<reference key="1">
    <citation type="journal article" date="2007" name="Nat. Biotechnol.">
        <title>Comparative analysis of the complete genome sequence of the plant growth-promoting bacterium Bacillus amyloliquefaciens FZB42.</title>
        <authorList>
            <person name="Chen X.H."/>
            <person name="Koumoutsi A."/>
            <person name="Scholz R."/>
            <person name="Eisenreich A."/>
            <person name="Schneider K."/>
            <person name="Heinemeyer I."/>
            <person name="Morgenstern B."/>
            <person name="Voss B."/>
            <person name="Hess W.R."/>
            <person name="Reva O."/>
            <person name="Junge H."/>
            <person name="Voigt B."/>
            <person name="Jungblut P.R."/>
            <person name="Vater J."/>
            <person name="Suessmuth R."/>
            <person name="Liesegang H."/>
            <person name="Strittmatter A."/>
            <person name="Gottschalk G."/>
            <person name="Borriss R."/>
        </authorList>
    </citation>
    <scope>NUCLEOTIDE SEQUENCE [LARGE SCALE GENOMIC DNA]</scope>
    <source>
        <strain>DSM 23117 / BGSC 10A6 / LMG 26770 / FZB42</strain>
    </source>
</reference>
<organism>
    <name type="scientific">Bacillus velezensis (strain DSM 23117 / BGSC 10A6 / LMG 26770 / FZB42)</name>
    <name type="common">Bacillus amyloliquefaciens subsp. plantarum</name>
    <dbReference type="NCBI Taxonomy" id="326423"/>
    <lineage>
        <taxon>Bacteria</taxon>
        <taxon>Bacillati</taxon>
        <taxon>Bacillota</taxon>
        <taxon>Bacilli</taxon>
        <taxon>Bacillales</taxon>
        <taxon>Bacillaceae</taxon>
        <taxon>Bacillus</taxon>
        <taxon>Bacillus amyloliquefaciens group</taxon>
    </lineage>
</organism>